<name>NODD1_NEOGA</name>
<keyword id="KW-0010">Activator</keyword>
<keyword id="KW-0238">DNA-binding</keyword>
<keyword id="KW-0536">Nodulation</keyword>
<keyword id="KW-0678">Repressor</keyword>
<keyword id="KW-0804">Transcription</keyword>
<keyword id="KW-0805">Transcription regulation</keyword>
<evidence type="ECO:0000255" key="1">
    <source>
        <dbReference type="PROSITE-ProRule" id="PRU00253"/>
    </source>
</evidence>
<evidence type="ECO:0000305" key="2"/>
<organism>
    <name type="scientific">Neorhizobium galegae</name>
    <name type="common">Rhizobium galegae</name>
    <dbReference type="NCBI Taxonomy" id="399"/>
    <lineage>
        <taxon>Bacteria</taxon>
        <taxon>Pseudomonadati</taxon>
        <taxon>Pseudomonadota</taxon>
        <taxon>Alphaproteobacteria</taxon>
        <taxon>Hyphomicrobiales</taxon>
        <taxon>Rhizobiaceae</taxon>
        <taxon>Rhizobium/Agrobacterium group</taxon>
        <taxon>Neorhizobium</taxon>
    </lineage>
</organism>
<protein>
    <recommendedName>
        <fullName>Nodulation protein D 1</fullName>
    </recommendedName>
</protein>
<accession>P50331</accession>
<reference key="1">
    <citation type="journal article" date="1999" name="FEMS Microbiol. Lett.">
        <title>Identification of nodulation promoter (nod-box) regions of Rhizobium galegae.</title>
        <authorList>
            <person name="Suominen L."/>
            <person name="Paulin L."/>
            <person name="Saano A."/>
            <person name="Saren A.-M."/>
            <person name="Tas E."/>
            <person name="Lindstroem K."/>
        </authorList>
    </citation>
    <scope>NUCLEOTIDE SEQUENCE [GENOMIC DNA]</scope>
    <source>
        <strain>HAMBI 1174</strain>
    </source>
</reference>
<feature type="chain" id="PRO_0000105709" description="Nodulation protein D 1">
    <location>
        <begin position="1"/>
        <end position="310"/>
    </location>
</feature>
<feature type="domain" description="HTH lysR-type" evidence="1">
    <location>
        <begin position="6"/>
        <end position="63"/>
    </location>
</feature>
<feature type="DNA-binding region" description="H-T-H motif" evidence="1">
    <location>
        <begin position="23"/>
        <end position="42"/>
    </location>
</feature>
<comment type="function">
    <text>NodD regulates the expression of the nodABCFE genes which encode other nodulation proteins. NodD is also a negative regulator of its own expression. Binds flavonoids as inducers.</text>
</comment>
<comment type="similarity">
    <text evidence="2">Belongs to the LysR transcriptional regulatory family.</text>
</comment>
<proteinExistence type="inferred from homology"/>
<dbReference type="EMBL" id="X87578">
    <property type="protein sequence ID" value="CAA60880.1"/>
    <property type="molecule type" value="Genomic_DNA"/>
</dbReference>
<dbReference type="RefSeq" id="WP_041365343.1">
    <property type="nucleotide sequence ID" value="NZ_VZUL01000003.1"/>
</dbReference>
<dbReference type="SMR" id="P50331"/>
<dbReference type="GeneID" id="24261317"/>
<dbReference type="GO" id="GO:0003677">
    <property type="term" value="F:DNA binding"/>
    <property type="evidence" value="ECO:0007669"/>
    <property type="project" value="UniProtKB-KW"/>
</dbReference>
<dbReference type="GO" id="GO:0003700">
    <property type="term" value="F:DNA-binding transcription factor activity"/>
    <property type="evidence" value="ECO:0007669"/>
    <property type="project" value="InterPro"/>
</dbReference>
<dbReference type="CDD" id="cd08462">
    <property type="entry name" value="PBP2_NodD"/>
    <property type="match status" value="1"/>
</dbReference>
<dbReference type="Gene3D" id="3.40.190.10">
    <property type="entry name" value="Periplasmic binding protein-like II"/>
    <property type="match status" value="2"/>
</dbReference>
<dbReference type="Gene3D" id="1.10.10.10">
    <property type="entry name" value="Winged helix-like DNA-binding domain superfamily/Winged helix DNA-binding domain"/>
    <property type="match status" value="1"/>
</dbReference>
<dbReference type="InterPro" id="IPR050389">
    <property type="entry name" value="LysR-type_TF"/>
</dbReference>
<dbReference type="InterPro" id="IPR005119">
    <property type="entry name" value="LysR_subst-bd"/>
</dbReference>
<dbReference type="InterPro" id="IPR037416">
    <property type="entry name" value="NodD_PBP2"/>
</dbReference>
<dbReference type="InterPro" id="IPR000847">
    <property type="entry name" value="Tscrpt_reg_HTH_LysR"/>
</dbReference>
<dbReference type="InterPro" id="IPR036388">
    <property type="entry name" value="WH-like_DNA-bd_sf"/>
</dbReference>
<dbReference type="InterPro" id="IPR036390">
    <property type="entry name" value="WH_DNA-bd_sf"/>
</dbReference>
<dbReference type="PANTHER" id="PTHR30118:SF6">
    <property type="entry name" value="HTH-TYPE TRANSCRIPTIONAL REGULATOR LEUO"/>
    <property type="match status" value="1"/>
</dbReference>
<dbReference type="PANTHER" id="PTHR30118">
    <property type="entry name" value="HTH-TYPE TRANSCRIPTIONAL REGULATOR LEUO-RELATED"/>
    <property type="match status" value="1"/>
</dbReference>
<dbReference type="Pfam" id="PF00126">
    <property type="entry name" value="HTH_1"/>
    <property type="match status" value="1"/>
</dbReference>
<dbReference type="Pfam" id="PF03466">
    <property type="entry name" value="LysR_substrate"/>
    <property type="match status" value="1"/>
</dbReference>
<dbReference type="PRINTS" id="PR00039">
    <property type="entry name" value="HTHLYSR"/>
</dbReference>
<dbReference type="SUPFAM" id="SSF53850">
    <property type="entry name" value="Periplasmic binding protein-like II"/>
    <property type="match status" value="1"/>
</dbReference>
<dbReference type="SUPFAM" id="SSF46785">
    <property type="entry name" value="Winged helix' DNA-binding domain"/>
    <property type="match status" value="1"/>
</dbReference>
<dbReference type="PROSITE" id="PS50931">
    <property type="entry name" value="HTH_LYSR"/>
    <property type="match status" value="1"/>
</dbReference>
<sequence>MRFRGLDLNLLVALDALMTERQLTAAARRINLSQPAMSAAIARLRNYFHDDLFVMQGRELILTPRAEALAPAVRDTLLHIQLSVIAWDPIKPAESDRRFRIILSDFMTLIFMEKVIKRIAREAPRVTFELLPLDDDPDELLRRGDVDFLILPDLLMPNIHPKAKLFDETLVCVGCPMNKQLEDRLSMEKFMSMGHVAAKFGRLMKPSVEQWLLLEHGFRRRIELVVPGFTLIPPLLVGTDRIATLPMRLVKHFEQTIPLKIVEHPLPPLHFPLAVQWPALHNTDPGNIWMREIMFDEASRMEASSETSAV</sequence>
<gene>
    <name type="primary">nodD1</name>
</gene>